<gene>
    <name evidence="1" type="primary">rimP</name>
    <name type="ordered locus">RER_26290</name>
</gene>
<name>RIMP_RHOE4</name>
<keyword id="KW-0963">Cytoplasm</keyword>
<keyword id="KW-0690">Ribosome biogenesis</keyword>
<evidence type="ECO:0000255" key="1">
    <source>
        <dbReference type="HAMAP-Rule" id="MF_01077"/>
    </source>
</evidence>
<evidence type="ECO:0000256" key="2">
    <source>
        <dbReference type="SAM" id="MobiDB-lite"/>
    </source>
</evidence>
<accession>C0ZYA2</accession>
<dbReference type="EMBL" id="AP008957">
    <property type="protein sequence ID" value="BAH33337.1"/>
    <property type="molecule type" value="Genomic_DNA"/>
</dbReference>
<dbReference type="RefSeq" id="WP_020907437.1">
    <property type="nucleotide sequence ID" value="NC_012490.1"/>
</dbReference>
<dbReference type="SMR" id="C0ZYA2"/>
<dbReference type="GeneID" id="57487389"/>
<dbReference type="KEGG" id="rer:RER_26290"/>
<dbReference type="eggNOG" id="COG0779">
    <property type="taxonomic scope" value="Bacteria"/>
</dbReference>
<dbReference type="HOGENOM" id="CLU_070525_3_0_11"/>
<dbReference type="Proteomes" id="UP000002204">
    <property type="component" value="Chromosome"/>
</dbReference>
<dbReference type="GO" id="GO:0005829">
    <property type="term" value="C:cytosol"/>
    <property type="evidence" value="ECO:0007669"/>
    <property type="project" value="TreeGrafter"/>
</dbReference>
<dbReference type="GO" id="GO:0000028">
    <property type="term" value="P:ribosomal small subunit assembly"/>
    <property type="evidence" value="ECO:0007669"/>
    <property type="project" value="TreeGrafter"/>
</dbReference>
<dbReference type="GO" id="GO:0006412">
    <property type="term" value="P:translation"/>
    <property type="evidence" value="ECO:0007669"/>
    <property type="project" value="TreeGrafter"/>
</dbReference>
<dbReference type="CDD" id="cd01734">
    <property type="entry name" value="YlxS_C"/>
    <property type="match status" value="1"/>
</dbReference>
<dbReference type="Gene3D" id="3.30.300.70">
    <property type="entry name" value="RimP-like superfamily, N-terminal"/>
    <property type="match status" value="1"/>
</dbReference>
<dbReference type="HAMAP" id="MF_01077">
    <property type="entry name" value="RimP"/>
    <property type="match status" value="1"/>
</dbReference>
<dbReference type="InterPro" id="IPR003728">
    <property type="entry name" value="Ribosome_maturation_RimP"/>
</dbReference>
<dbReference type="InterPro" id="IPR028998">
    <property type="entry name" value="RimP_C"/>
</dbReference>
<dbReference type="InterPro" id="IPR028989">
    <property type="entry name" value="RimP_N"/>
</dbReference>
<dbReference type="InterPro" id="IPR035956">
    <property type="entry name" value="RimP_N_sf"/>
</dbReference>
<dbReference type="NCBIfam" id="NF000930">
    <property type="entry name" value="PRK00092.2-2"/>
    <property type="match status" value="1"/>
</dbReference>
<dbReference type="PANTHER" id="PTHR33867">
    <property type="entry name" value="RIBOSOME MATURATION FACTOR RIMP"/>
    <property type="match status" value="1"/>
</dbReference>
<dbReference type="PANTHER" id="PTHR33867:SF1">
    <property type="entry name" value="RIBOSOME MATURATION FACTOR RIMP"/>
    <property type="match status" value="1"/>
</dbReference>
<dbReference type="Pfam" id="PF17384">
    <property type="entry name" value="DUF150_C"/>
    <property type="match status" value="1"/>
</dbReference>
<dbReference type="Pfam" id="PF02576">
    <property type="entry name" value="RimP_N"/>
    <property type="match status" value="1"/>
</dbReference>
<dbReference type="SUPFAM" id="SSF75420">
    <property type="entry name" value="YhbC-like, N-terminal domain"/>
    <property type="match status" value="1"/>
</dbReference>
<comment type="function">
    <text evidence="1">Required for maturation of 30S ribosomal subunits.</text>
</comment>
<comment type="subcellular location">
    <subcellularLocation>
        <location evidence="1">Cytoplasm</location>
    </subcellularLocation>
</comment>
<comment type="similarity">
    <text evidence="1">Belongs to the RimP family.</text>
</comment>
<protein>
    <recommendedName>
        <fullName evidence="1">Ribosome maturation factor RimP</fullName>
    </recommendedName>
</protein>
<organism>
    <name type="scientific">Rhodococcus erythropolis (strain PR4 / NBRC 100887)</name>
    <dbReference type="NCBI Taxonomy" id="234621"/>
    <lineage>
        <taxon>Bacteria</taxon>
        <taxon>Bacillati</taxon>
        <taxon>Actinomycetota</taxon>
        <taxon>Actinomycetes</taxon>
        <taxon>Mycobacteriales</taxon>
        <taxon>Nocardiaceae</taxon>
        <taxon>Rhodococcus</taxon>
        <taxon>Rhodococcus erythropolis group</taxon>
    </lineage>
</organism>
<sequence>MPVPSRERVIELISELVHAQGYDVEDVVVTSAGKHSAVRIMVDSDAGIELDAAAEISRLVSELFDSLEEIGETPYTLEVTSPGIDRPLTLERHWRRARGRKARIDLAGETVVGRIGTLNDDSVAVVIGGRGGLTVREIALGDVQKAVVQVEFSKPSEAELELAGGIPEGRAVPSDAVDLTDDSGVDSVEDDEAELEDVENEEGFDK</sequence>
<proteinExistence type="inferred from homology"/>
<reference key="1">
    <citation type="submission" date="2005-03" db="EMBL/GenBank/DDBJ databases">
        <title>Comparison of the complete genome sequences of Rhodococcus erythropolis PR4 and Rhodococcus opacus B4.</title>
        <authorList>
            <person name="Takarada H."/>
            <person name="Sekine M."/>
            <person name="Hosoyama A."/>
            <person name="Yamada R."/>
            <person name="Fujisawa T."/>
            <person name="Omata S."/>
            <person name="Shimizu A."/>
            <person name="Tsukatani N."/>
            <person name="Tanikawa S."/>
            <person name="Fujita N."/>
            <person name="Harayama S."/>
        </authorList>
    </citation>
    <scope>NUCLEOTIDE SEQUENCE [LARGE SCALE GENOMIC DNA]</scope>
    <source>
        <strain>PR4 / NBRC 100887</strain>
    </source>
</reference>
<feature type="chain" id="PRO_0000384745" description="Ribosome maturation factor RimP">
    <location>
        <begin position="1"/>
        <end position="206"/>
    </location>
</feature>
<feature type="region of interest" description="Disordered" evidence="2">
    <location>
        <begin position="164"/>
        <end position="206"/>
    </location>
</feature>
<feature type="compositionally biased region" description="Acidic residues" evidence="2">
    <location>
        <begin position="178"/>
        <end position="206"/>
    </location>
</feature>